<accession>Q4KF07</accession>
<protein>
    <recommendedName>
        <fullName evidence="1">3-isopropylmalate dehydratase small subunit</fullName>
        <ecNumber evidence="1">4.2.1.33</ecNumber>
    </recommendedName>
    <alternativeName>
        <fullName evidence="1">Alpha-IPM isomerase</fullName>
        <shortName evidence="1">IPMI</shortName>
    </alternativeName>
    <alternativeName>
        <fullName evidence="1">Isopropylmalate isomerase</fullName>
    </alternativeName>
</protein>
<name>LEUD_PSEF5</name>
<organism>
    <name type="scientific">Pseudomonas fluorescens (strain ATCC BAA-477 / NRRL B-23932 / Pf-5)</name>
    <dbReference type="NCBI Taxonomy" id="220664"/>
    <lineage>
        <taxon>Bacteria</taxon>
        <taxon>Pseudomonadati</taxon>
        <taxon>Pseudomonadota</taxon>
        <taxon>Gammaproteobacteria</taxon>
        <taxon>Pseudomonadales</taxon>
        <taxon>Pseudomonadaceae</taxon>
        <taxon>Pseudomonas</taxon>
    </lineage>
</organism>
<feature type="chain" id="PRO_0000141858" description="3-isopropylmalate dehydratase small subunit">
    <location>
        <begin position="1"/>
        <end position="214"/>
    </location>
</feature>
<dbReference type="EC" id="4.2.1.33" evidence="1"/>
<dbReference type="EMBL" id="CP000076">
    <property type="protein sequence ID" value="AAY91343.1"/>
    <property type="molecule type" value="Genomic_DNA"/>
</dbReference>
<dbReference type="RefSeq" id="WP_011060376.1">
    <property type="nucleotide sequence ID" value="NC_004129.6"/>
</dbReference>
<dbReference type="SMR" id="Q4KF07"/>
<dbReference type="STRING" id="220664.PFL_2064"/>
<dbReference type="KEGG" id="pfl:PFL_2064"/>
<dbReference type="PATRIC" id="fig|220664.5.peg.2096"/>
<dbReference type="eggNOG" id="COG0066">
    <property type="taxonomic scope" value="Bacteria"/>
</dbReference>
<dbReference type="HOGENOM" id="CLU_081378_0_3_6"/>
<dbReference type="UniPathway" id="UPA00048">
    <property type="reaction ID" value="UER00071"/>
</dbReference>
<dbReference type="Proteomes" id="UP000008540">
    <property type="component" value="Chromosome"/>
</dbReference>
<dbReference type="GO" id="GO:0009316">
    <property type="term" value="C:3-isopropylmalate dehydratase complex"/>
    <property type="evidence" value="ECO:0007669"/>
    <property type="project" value="InterPro"/>
</dbReference>
<dbReference type="GO" id="GO:0003861">
    <property type="term" value="F:3-isopropylmalate dehydratase activity"/>
    <property type="evidence" value="ECO:0007669"/>
    <property type="project" value="UniProtKB-UniRule"/>
</dbReference>
<dbReference type="GO" id="GO:0009098">
    <property type="term" value="P:L-leucine biosynthetic process"/>
    <property type="evidence" value="ECO:0007669"/>
    <property type="project" value="UniProtKB-UniRule"/>
</dbReference>
<dbReference type="CDD" id="cd01577">
    <property type="entry name" value="IPMI_Swivel"/>
    <property type="match status" value="1"/>
</dbReference>
<dbReference type="FunFam" id="3.20.19.10:FF:000003">
    <property type="entry name" value="3-isopropylmalate dehydratase small subunit"/>
    <property type="match status" value="1"/>
</dbReference>
<dbReference type="Gene3D" id="3.20.19.10">
    <property type="entry name" value="Aconitase, domain 4"/>
    <property type="match status" value="1"/>
</dbReference>
<dbReference type="HAMAP" id="MF_01031">
    <property type="entry name" value="LeuD_type1"/>
    <property type="match status" value="1"/>
</dbReference>
<dbReference type="InterPro" id="IPR004431">
    <property type="entry name" value="3-IsopropMal_deHydase_ssu"/>
</dbReference>
<dbReference type="InterPro" id="IPR015928">
    <property type="entry name" value="Aconitase/3IPM_dehydase_swvl"/>
</dbReference>
<dbReference type="InterPro" id="IPR000573">
    <property type="entry name" value="AconitaseA/IPMdHydase_ssu_swvl"/>
</dbReference>
<dbReference type="InterPro" id="IPR033940">
    <property type="entry name" value="IPMI_Swivel"/>
</dbReference>
<dbReference type="InterPro" id="IPR050075">
    <property type="entry name" value="LeuD"/>
</dbReference>
<dbReference type="NCBIfam" id="TIGR00171">
    <property type="entry name" value="leuD"/>
    <property type="match status" value="1"/>
</dbReference>
<dbReference type="NCBIfam" id="NF002458">
    <property type="entry name" value="PRK01641.1"/>
    <property type="match status" value="1"/>
</dbReference>
<dbReference type="PANTHER" id="PTHR43345:SF5">
    <property type="entry name" value="3-ISOPROPYLMALATE DEHYDRATASE SMALL SUBUNIT"/>
    <property type="match status" value="1"/>
</dbReference>
<dbReference type="PANTHER" id="PTHR43345">
    <property type="entry name" value="3-ISOPROPYLMALATE DEHYDRATASE SMALL SUBUNIT 2-RELATED-RELATED"/>
    <property type="match status" value="1"/>
</dbReference>
<dbReference type="Pfam" id="PF00694">
    <property type="entry name" value="Aconitase_C"/>
    <property type="match status" value="1"/>
</dbReference>
<dbReference type="SUPFAM" id="SSF52016">
    <property type="entry name" value="LeuD/IlvD-like"/>
    <property type="match status" value="1"/>
</dbReference>
<gene>
    <name evidence="1" type="primary">leuD</name>
    <name type="ordered locus">PFL_2064</name>
</gene>
<evidence type="ECO:0000255" key="1">
    <source>
        <dbReference type="HAMAP-Rule" id="MF_01031"/>
    </source>
</evidence>
<proteinExistence type="inferred from homology"/>
<keyword id="KW-0028">Amino-acid biosynthesis</keyword>
<keyword id="KW-0100">Branched-chain amino acid biosynthesis</keyword>
<keyword id="KW-0432">Leucine biosynthesis</keyword>
<keyword id="KW-0456">Lyase</keyword>
<comment type="function">
    <text evidence="1">Catalyzes the isomerization between 2-isopropylmalate and 3-isopropylmalate, via the formation of 2-isopropylmaleate.</text>
</comment>
<comment type="catalytic activity">
    <reaction evidence="1">
        <text>(2R,3S)-3-isopropylmalate = (2S)-2-isopropylmalate</text>
        <dbReference type="Rhea" id="RHEA:32287"/>
        <dbReference type="ChEBI" id="CHEBI:1178"/>
        <dbReference type="ChEBI" id="CHEBI:35121"/>
        <dbReference type="EC" id="4.2.1.33"/>
    </reaction>
</comment>
<comment type="pathway">
    <text evidence="1">Amino-acid biosynthesis; L-leucine biosynthesis; L-leucine from 3-methyl-2-oxobutanoate: step 2/4.</text>
</comment>
<comment type="subunit">
    <text evidence="1">Heterodimer of LeuC and LeuD.</text>
</comment>
<comment type="similarity">
    <text evidence="1">Belongs to the LeuD family. LeuD type 1 subfamily.</text>
</comment>
<reference key="1">
    <citation type="journal article" date="2005" name="Nat. Biotechnol.">
        <title>Complete genome sequence of the plant commensal Pseudomonas fluorescens Pf-5.</title>
        <authorList>
            <person name="Paulsen I.T."/>
            <person name="Press C.M."/>
            <person name="Ravel J."/>
            <person name="Kobayashi D.Y."/>
            <person name="Myers G.S.A."/>
            <person name="Mavrodi D.V."/>
            <person name="DeBoy R.T."/>
            <person name="Seshadri R."/>
            <person name="Ren Q."/>
            <person name="Madupu R."/>
            <person name="Dodson R.J."/>
            <person name="Durkin A.S."/>
            <person name="Brinkac L.M."/>
            <person name="Daugherty S.C."/>
            <person name="Sullivan S.A."/>
            <person name="Rosovitz M.J."/>
            <person name="Gwinn M.L."/>
            <person name="Zhou L."/>
            <person name="Schneider D.J."/>
            <person name="Cartinhour S.W."/>
            <person name="Nelson W.C."/>
            <person name="Weidman J."/>
            <person name="Watkins K."/>
            <person name="Tran K."/>
            <person name="Khouri H."/>
            <person name="Pierson E.A."/>
            <person name="Pierson L.S. III"/>
            <person name="Thomashow L.S."/>
            <person name="Loper J.E."/>
        </authorList>
    </citation>
    <scope>NUCLEOTIDE SEQUENCE [LARGE SCALE GENOMIC DNA]</scope>
    <source>
        <strain>ATCC BAA-477 / NRRL B-23932 / Pf-5</strain>
    </source>
</reference>
<sequence>MKAFTQHNGLVAPLDRANVDTDQIIPKQFLKSIKRTGFGPNLFDEWRYLDVGQPYQDNSKRPLNKDFVLNAERYQGASVLLARENFGCGSSREHAPWALEEYGFRSIIAPSYADIFFNNSFKNGLLPIILSDAEVDELFQQVEATPGYQLRIDLQAQTVTRPDGKVLKFEIDAFRKHCLLNGLDDIGLTLQDGDAIAAFEAKHRASQPWLFRDA</sequence>